<feature type="signal peptide" evidence="1">
    <location>
        <begin position="1"/>
        <end position="23"/>
    </location>
</feature>
<feature type="chain" id="PRO_0000036027" description="UDP-glucuronosyltransferase 2B17">
    <location>
        <begin position="24"/>
        <end position="530"/>
    </location>
</feature>
<feature type="transmembrane region" description="Helical" evidence="3">
    <location>
        <begin position="494"/>
        <end position="510"/>
    </location>
</feature>
<feature type="sequence conflict" description="In Ref. 2; CAA68351." evidence="6" ref="2">
    <original>T</original>
    <variation>S</variation>
    <location>
        <position position="54"/>
    </location>
</feature>
<feature type="sequence conflict" description="In Ref. 2; CAA68351." evidence="6" ref="2">
    <original>G</original>
    <variation>E</variation>
    <location>
        <position position="119"/>
    </location>
</feature>
<feature type="sequence conflict" description="In Ref. 2; CAA68351." evidence="6" ref="2">
    <original>S</original>
    <variation>G</variation>
    <location>
        <position position="376"/>
    </location>
</feature>
<feature type="sequence conflict" description="In Ref. 2; CAA68351." evidence="6" ref="2">
    <original>S</original>
    <variation>T</variation>
    <location>
        <position position="424"/>
    </location>
</feature>
<feature type="sequence conflict" description="In Ref. 2; CAA68351." evidence="6" ref="2">
    <original>T</original>
    <variation>S</variation>
    <location>
        <position position="500"/>
    </location>
</feature>
<name>UDB17_RAT</name>
<dbReference type="EC" id="2.4.1.17" evidence="5"/>
<dbReference type="EMBL" id="M31109">
    <property type="protein sequence ID" value="AAA41280.1"/>
    <property type="molecule type" value="mRNA"/>
</dbReference>
<dbReference type="EMBL" id="Y00156">
    <property type="protein sequence ID" value="CAA68351.1"/>
    <property type="molecule type" value="mRNA"/>
</dbReference>
<dbReference type="PIR" id="S07390">
    <property type="entry name" value="S07390"/>
</dbReference>
<dbReference type="RefSeq" id="NP_695226.2">
    <property type="nucleotide sequence ID" value="NM_153314.2"/>
</dbReference>
<dbReference type="SMR" id="P08542"/>
<dbReference type="FunCoup" id="P08542">
    <property type="interactions" value="228"/>
</dbReference>
<dbReference type="SwissLipids" id="SLP:000001700"/>
<dbReference type="CAZy" id="GT1">
    <property type="family name" value="Glycosyltransferase Family 1"/>
</dbReference>
<dbReference type="iPTMnet" id="P08542"/>
<dbReference type="PhosphoSitePlus" id="P08542"/>
<dbReference type="GeneID" id="266685"/>
<dbReference type="KEGG" id="rno:266685"/>
<dbReference type="UCSC" id="RGD:628623">
    <property type="organism name" value="rat"/>
</dbReference>
<dbReference type="AGR" id="RGD:628623"/>
<dbReference type="CTD" id="7366"/>
<dbReference type="RGD" id="628623">
    <property type="gene designation" value="Ugt2b5"/>
</dbReference>
<dbReference type="InParanoid" id="P08542"/>
<dbReference type="BRENDA" id="2.4.1.17">
    <property type="organism ID" value="5301"/>
</dbReference>
<dbReference type="Reactome" id="R-RNO-156588">
    <property type="pathway name" value="Glucuronidation"/>
</dbReference>
<dbReference type="Reactome" id="R-RNO-9749641">
    <property type="pathway name" value="Aspirin ADME"/>
</dbReference>
<dbReference type="Reactome" id="R-RNO-9753281">
    <property type="pathway name" value="Paracetamol ADME"/>
</dbReference>
<dbReference type="Reactome" id="R-RNO-9757110">
    <property type="pathway name" value="Prednisone ADME"/>
</dbReference>
<dbReference type="PRO" id="PR:P08542"/>
<dbReference type="Proteomes" id="UP000002494">
    <property type="component" value="Unplaced"/>
</dbReference>
<dbReference type="GO" id="GO:0005789">
    <property type="term" value="C:endoplasmic reticulum membrane"/>
    <property type="evidence" value="ECO:0007669"/>
    <property type="project" value="UniProtKB-SubCell"/>
</dbReference>
<dbReference type="GO" id="GO:0015020">
    <property type="term" value="F:glucuronosyltransferase activity"/>
    <property type="evidence" value="ECO:0000314"/>
    <property type="project" value="RGD"/>
</dbReference>
<dbReference type="GO" id="GO:0071361">
    <property type="term" value="P:cellular response to ethanol"/>
    <property type="evidence" value="ECO:0000270"/>
    <property type="project" value="RGD"/>
</dbReference>
<dbReference type="GO" id="GO:0071385">
    <property type="term" value="P:cellular response to glucocorticoid stimulus"/>
    <property type="evidence" value="ECO:0000270"/>
    <property type="project" value="RGD"/>
</dbReference>
<dbReference type="GO" id="GO:0071378">
    <property type="term" value="P:cellular response to growth hormone stimulus"/>
    <property type="evidence" value="ECO:0000270"/>
    <property type="project" value="RGD"/>
</dbReference>
<dbReference type="GO" id="GO:0071394">
    <property type="term" value="P:cellular response to testosterone stimulus"/>
    <property type="evidence" value="ECO:0000270"/>
    <property type="project" value="RGD"/>
</dbReference>
<dbReference type="GO" id="GO:0008210">
    <property type="term" value="P:estrogen metabolic process"/>
    <property type="evidence" value="ECO:0000250"/>
    <property type="project" value="UniProtKB"/>
</dbReference>
<dbReference type="GO" id="GO:0032496">
    <property type="term" value="P:response to lipopolysaccharide"/>
    <property type="evidence" value="ECO:0000270"/>
    <property type="project" value="RGD"/>
</dbReference>
<dbReference type="CDD" id="cd03784">
    <property type="entry name" value="GT1_Gtf-like"/>
    <property type="match status" value="1"/>
</dbReference>
<dbReference type="FunFam" id="3.40.50.2000:FF:000001">
    <property type="entry name" value="UDP-glucuronosyltransferase"/>
    <property type="match status" value="1"/>
</dbReference>
<dbReference type="FunFam" id="3.40.50.2000:FF:000081">
    <property type="entry name" value="UDP-glucuronosyltransferase 2A2"/>
    <property type="match status" value="1"/>
</dbReference>
<dbReference type="Gene3D" id="3.40.50.2000">
    <property type="entry name" value="Glycogen Phosphorylase B"/>
    <property type="match status" value="2"/>
</dbReference>
<dbReference type="InterPro" id="IPR050271">
    <property type="entry name" value="UDP-glycosyltransferase"/>
</dbReference>
<dbReference type="InterPro" id="IPR002213">
    <property type="entry name" value="UDP_glucos_trans"/>
</dbReference>
<dbReference type="InterPro" id="IPR035595">
    <property type="entry name" value="UDP_glycos_trans_CS"/>
</dbReference>
<dbReference type="PANTHER" id="PTHR48043">
    <property type="entry name" value="EG:EG0003.4 PROTEIN-RELATED"/>
    <property type="match status" value="1"/>
</dbReference>
<dbReference type="PANTHER" id="PTHR48043:SF113">
    <property type="entry name" value="UDP GLUCURONOSYLTRANSFERASE 2 FAMILY, POLYPEPTIDE B38-RELATED"/>
    <property type="match status" value="1"/>
</dbReference>
<dbReference type="Pfam" id="PF00201">
    <property type="entry name" value="UDPGT"/>
    <property type="match status" value="1"/>
</dbReference>
<dbReference type="SUPFAM" id="SSF53756">
    <property type="entry name" value="UDP-Glycosyltransferase/glycogen phosphorylase"/>
    <property type="match status" value="1"/>
</dbReference>
<dbReference type="PROSITE" id="PS00375">
    <property type="entry name" value="UDPGT"/>
    <property type="match status" value="1"/>
</dbReference>
<gene>
    <name evidence="9" type="primary">Ugt2b17</name>
    <name type="synonym">Ugt2b3</name>
    <name type="synonym">Ugt2b5</name>
</gene>
<accession>P08542</accession>
<accession>P16915</accession>
<organism>
    <name type="scientific">Rattus norvegicus</name>
    <name type="common">Rat</name>
    <dbReference type="NCBI Taxonomy" id="10116"/>
    <lineage>
        <taxon>Eukaryota</taxon>
        <taxon>Metazoa</taxon>
        <taxon>Chordata</taxon>
        <taxon>Craniata</taxon>
        <taxon>Vertebrata</taxon>
        <taxon>Euteleostomi</taxon>
        <taxon>Mammalia</taxon>
        <taxon>Eutheria</taxon>
        <taxon>Euarchontoglires</taxon>
        <taxon>Glires</taxon>
        <taxon>Rodentia</taxon>
        <taxon>Myomorpha</taxon>
        <taxon>Muroidea</taxon>
        <taxon>Muridae</taxon>
        <taxon>Murinae</taxon>
        <taxon>Rattus</taxon>
    </lineage>
</organism>
<evidence type="ECO:0000250" key="1"/>
<evidence type="ECO:0000250" key="2">
    <source>
        <dbReference type="UniProtKB" id="O75795"/>
    </source>
</evidence>
<evidence type="ECO:0000255" key="3"/>
<evidence type="ECO:0000269" key="4">
    <source>
    </source>
</evidence>
<evidence type="ECO:0000269" key="5">
    <source>
    </source>
</evidence>
<evidence type="ECO:0000305" key="6"/>
<evidence type="ECO:0000305" key="7">
    <source>
    </source>
</evidence>
<evidence type="ECO:0000305" key="8">
    <source>
    </source>
</evidence>
<evidence type="ECO:0000312" key="9">
    <source>
        <dbReference type="RGD" id="628623"/>
    </source>
</evidence>
<sequence>MPGKWISALLLLQISCCFQSGNCGKVLVWPMEFSHWMNIKTILDELVQRGHEVTVLKPSAYYVLDPKKSPDLKFETFPTSVSKDELENYFIKLVDVWTYELQRDTCLSYSPLLQNMIDGFSDYYLSLCKDTVSNKQLMAKLQESKFDVLLSDPVAACGELIAEVLHIPFLYSLRFSPGYKIEKSSGRFILPPSYVPVILSGMGGPMTFIDRVKNMICTLYFDFWFHMFNAKKWDPFYSEILGRPTTLAETMGKAEMWLIRSYWDLEFPHPTLPNVDYIGGLQCRPPKPLPKDMEDFVQSSGEHGVVVFSLGSMVSSMTEEKANAIAWALAQIPQKVLWKFDGKTPATLGPNTRVYKWLPQNDLLGHPKTKAFVTHSGANGVYEAIYHGIPMVGIPMFGEQHDNIAHMVAKGAAVTLNIRTMSKSDLFNALKEIINNPFYKKNAVWLSTIHHDQPMKPLDKAVFWIEFVMRHKGAKHLRPLGHDLPWYQYHSLDVIGFLLTCSAVIAVLTVKCFLFIYRLFVKKEKKMKNE</sequence>
<protein>
    <recommendedName>
        <fullName evidence="6">UDP-glucuronosyltransferase 2B17</fullName>
        <shortName>UDPGT 2B17</shortName>
        <shortName>UGT2B17</shortName>
        <ecNumber evidence="5">2.4.1.17</ecNumber>
    </recommendedName>
    <alternativeName>
        <fullName>17-beta-hydroxysteroid-specific UDPGT</fullName>
    </alternativeName>
    <alternativeName>
        <fullName>RLUG38</fullName>
    </alternativeName>
    <alternativeName>
        <fullName>Testosterone, dihydrotestosterone, and beta-estradiol-specific UDPGT</fullName>
    </alternativeName>
    <alternativeName>
        <fullName>UDP-glucuronosyltransferase 2B5</fullName>
        <shortName>UDPGT 2B5</shortName>
    </alternativeName>
    <alternativeName>
        <fullName>UDPGTr-3</fullName>
    </alternativeName>
</protein>
<proteinExistence type="evidence at protein level"/>
<keyword id="KW-0256">Endoplasmic reticulum</keyword>
<keyword id="KW-0328">Glycosyltransferase</keyword>
<keyword id="KW-0443">Lipid metabolism</keyword>
<keyword id="KW-0472">Membrane</keyword>
<keyword id="KW-1185">Reference proteome</keyword>
<keyword id="KW-0732">Signal</keyword>
<keyword id="KW-0753">Steroid metabolism</keyword>
<keyword id="KW-0808">Transferase</keyword>
<keyword id="KW-0812">Transmembrane</keyword>
<keyword id="KW-1133">Transmembrane helix</keyword>
<comment type="function">
    <text evidence="2 4 5">UDP-glucuronosyltransferase (UGT) that catalyzes phase II biotransformation reactions in which lipophilic substrates are conjugated with glucuronic acid to increase the metabolite's water solubility, thereby facilitating excretion into either the urine or bile (PubMed:18719240). Catalyzes the glucuronidation of endogenous steroid hormones such as androgens (epitestosterone, androsterone) and estrogens (estradiol, epiestradiol) (By similarity) (PubMed:18719240).</text>
</comment>
<comment type="catalytic activity">
    <reaction evidence="4 5">
        <text>glucuronate acceptor + UDP-alpha-D-glucuronate = acceptor beta-D-glucuronoside + UDP + H(+)</text>
        <dbReference type="Rhea" id="RHEA:21032"/>
        <dbReference type="ChEBI" id="CHEBI:15378"/>
        <dbReference type="ChEBI" id="CHEBI:58052"/>
        <dbReference type="ChEBI" id="CHEBI:58223"/>
        <dbReference type="ChEBI" id="CHEBI:132367"/>
        <dbReference type="ChEBI" id="CHEBI:132368"/>
        <dbReference type="EC" id="2.4.1.17"/>
    </reaction>
    <physiologicalReaction direction="left-to-right" evidence="7 8">
        <dbReference type="Rhea" id="RHEA:21033"/>
    </physiologicalReaction>
</comment>
<comment type="catalytic activity">
    <reaction evidence="2">
        <text>17alpha-estradiol + UDP-alpha-D-glucuronate = 17alpha-estradiol 3-O-(beta-D-glucuronate) + UDP + H(+)</text>
        <dbReference type="Rhea" id="RHEA:52868"/>
        <dbReference type="ChEBI" id="CHEBI:15378"/>
        <dbReference type="ChEBI" id="CHEBI:17160"/>
        <dbReference type="ChEBI" id="CHEBI:57529"/>
        <dbReference type="ChEBI" id="CHEBI:58052"/>
        <dbReference type="ChEBI" id="CHEBI:58223"/>
    </reaction>
    <physiologicalReaction direction="left-to-right" evidence="2">
        <dbReference type="Rhea" id="RHEA:52869"/>
    </physiologicalReaction>
</comment>
<comment type="catalytic activity">
    <reaction evidence="5">
        <text>17alpha-estradiol + UDP-alpha-D-glucuronate = 17alpha-estradiol 17-O-(beta-D-glucuronate) + UDP + H(+)</text>
        <dbReference type="Rhea" id="RHEA:52872"/>
        <dbReference type="ChEBI" id="CHEBI:15378"/>
        <dbReference type="ChEBI" id="CHEBI:17160"/>
        <dbReference type="ChEBI" id="CHEBI:58052"/>
        <dbReference type="ChEBI" id="CHEBI:58223"/>
        <dbReference type="ChEBI" id="CHEBI:136642"/>
    </reaction>
    <physiologicalReaction direction="left-to-right" evidence="8">
        <dbReference type="Rhea" id="RHEA:52873"/>
    </physiologicalReaction>
</comment>
<comment type="catalytic activity">
    <reaction evidence="5">
        <text>17beta-estradiol + UDP-alpha-D-glucuronate = 17beta-estradiol 17-O-(beta-D-glucuronate) + UDP + H(+)</text>
        <dbReference type="Rhea" id="RHEA:52464"/>
        <dbReference type="ChEBI" id="CHEBI:15378"/>
        <dbReference type="ChEBI" id="CHEBI:16469"/>
        <dbReference type="ChEBI" id="CHEBI:58052"/>
        <dbReference type="ChEBI" id="CHEBI:58223"/>
        <dbReference type="ChEBI" id="CHEBI:82961"/>
    </reaction>
    <physiologicalReaction direction="left-to-right" evidence="8">
        <dbReference type="Rhea" id="RHEA:52465"/>
    </physiologicalReaction>
</comment>
<comment type="catalytic activity">
    <reaction evidence="2">
        <text>17beta-hydroxy-5alpha-androstan-3-one + UDP-alpha-D-glucuronate = 5alpha-dihydrotestosterone 17-O-(beta-D-glucuronate) + UDP + H(+)</text>
        <dbReference type="Rhea" id="RHEA:53000"/>
        <dbReference type="ChEBI" id="CHEBI:15378"/>
        <dbReference type="ChEBI" id="CHEBI:16330"/>
        <dbReference type="ChEBI" id="CHEBI:58052"/>
        <dbReference type="ChEBI" id="CHEBI:58223"/>
        <dbReference type="ChEBI" id="CHEBI:136914"/>
    </reaction>
    <physiologicalReaction direction="left-to-right" evidence="2">
        <dbReference type="Rhea" id="RHEA:53001"/>
    </physiologicalReaction>
</comment>
<comment type="catalytic activity">
    <reaction evidence="2">
        <text>testosterone + UDP-alpha-D-glucuronate = testosterone 17-O-(beta-D-glucuronate) + UDP + H(+)</text>
        <dbReference type="Rhea" id="RHEA:52456"/>
        <dbReference type="ChEBI" id="CHEBI:15378"/>
        <dbReference type="ChEBI" id="CHEBI:17347"/>
        <dbReference type="ChEBI" id="CHEBI:58052"/>
        <dbReference type="ChEBI" id="CHEBI:58223"/>
        <dbReference type="ChEBI" id="CHEBI:136639"/>
    </reaction>
    <physiologicalReaction direction="left-to-right" evidence="2">
        <dbReference type="Rhea" id="RHEA:52457"/>
    </physiologicalReaction>
</comment>
<comment type="biophysicochemical properties">
    <kinetics>
        <KM evidence="5">30.2 uM for 17alpha-estradiol/epiestradiol (when assaying glucuronidation at position 17)</KM>
        <KM evidence="5">19.5 uM for 17beta-estradiol/estradiol (when assaying glucuronidation at position 17)</KM>
        <Vmax evidence="5">8110.0 pmol/min/mg enzyme for the formation of 17alpha-estradiol 17-O-(beta-D-glucuronate)</Vmax>
        <Vmax evidence="5">5890.0 pmol/min/mg enzyme for the formation of 17beta-estradiol 17-O-(beta-D-glucuronate)</Vmax>
    </kinetics>
</comment>
<comment type="subcellular location">
    <subcellularLocation>
        <location evidence="2">Endoplasmic reticulum membrane</location>
        <topology evidence="3">Single-pass membrane protein</topology>
    </subcellularLocation>
</comment>
<comment type="induction">
    <text>Constitutively expressed.</text>
</comment>
<comment type="similarity">
    <text evidence="6">Belongs to the UDP-glycosyltransferase family.</text>
</comment>
<reference key="1">
    <citation type="journal article" date="1987" name="J. Biol. Chem.">
        <title>Rat liver UDP-glucuronosyltransferase. Identification of cDNAs encoding two enzymes which glucuronidate testosterone, dihydrotestosterone, and beta-estradiol.</title>
        <authorList>
            <person name="McKenzie P.I."/>
        </authorList>
    </citation>
    <scope>NUCLEOTIDE SEQUENCE [MRNA]</scope>
    <source>
        <tissue>Liver</tissue>
    </source>
</reference>
<reference key="2">
    <citation type="journal article" date="1987" name="Nucleic Acids Res.">
        <title>Nucleotide and deduced amino acid sequence of rat liver 17 beta-hydroxysteroid UDP-glucuronosyltransferase.</title>
        <authorList>
            <person name="Harding D."/>
            <person name="Wilson S.M."/>
            <person name="Jackson M.R."/>
            <person name="Burchell B."/>
            <person name="Green M.D."/>
            <person name="Tephly T.R."/>
        </authorList>
    </citation>
    <scope>NUCLEOTIDE SEQUENCE [MRNA]</scope>
    <source>
        <tissue>Liver</tissue>
    </source>
</reference>
<reference key="3">
    <citation type="journal article" date="1990" name="J. Biol. Chem.">
        <title>The cDNA sequence and expression of a variant 17 beta-hydroxysteroid UDP-glucuronosyltransferase.</title>
        <authorList>
            <person name="McKenzie P.I."/>
        </authorList>
    </citation>
    <scope>CATALYTIC ACTIVITY</scope>
    <scope>FUNCTION</scope>
</reference>
<reference key="4">
    <citation type="journal article" date="2008" name="Drug Metab. Dispos.">
        <title>The configuration of the 17-hydroxy group variably influences the glucuronidation of beta-estradiol and epiestradiol by human UDP-glucuronosyltransferases.</title>
        <authorList>
            <person name="Itaeaho K."/>
            <person name="Mackenzie P.I."/>
            <person name="Ikushiro S."/>
            <person name="Miners J.O."/>
            <person name="Finel M."/>
        </authorList>
    </citation>
    <scope>FUNCTION</scope>
    <scope>CATALYTIC ACTIVITY</scope>
    <scope>BIOPHYSICOCHEMICAL PROPERTIES</scope>
</reference>